<dbReference type="EC" id="2.7.1.39" evidence="1"/>
<dbReference type="EMBL" id="BA000017">
    <property type="protein sequence ID" value="BAB57492.1"/>
    <property type="molecule type" value="Genomic_DNA"/>
</dbReference>
<dbReference type="RefSeq" id="WP_000073180.1">
    <property type="nucleotide sequence ID" value="NC_002758.2"/>
</dbReference>
<dbReference type="SMR" id="P65228"/>
<dbReference type="KEGG" id="sav:SAV1330"/>
<dbReference type="HOGENOM" id="CLU_041243_0_0_9"/>
<dbReference type="PhylomeDB" id="P65228"/>
<dbReference type="UniPathway" id="UPA00050">
    <property type="reaction ID" value="UER00064"/>
</dbReference>
<dbReference type="Proteomes" id="UP000002481">
    <property type="component" value="Chromosome"/>
</dbReference>
<dbReference type="GO" id="GO:0005737">
    <property type="term" value="C:cytoplasm"/>
    <property type="evidence" value="ECO:0007669"/>
    <property type="project" value="UniProtKB-SubCell"/>
</dbReference>
<dbReference type="GO" id="GO:0005524">
    <property type="term" value="F:ATP binding"/>
    <property type="evidence" value="ECO:0007669"/>
    <property type="project" value="UniProtKB-UniRule"/>
</dbReference>
<dbReference type="GO" id="GO:0004413">
    <property type="term" value="F:homoserine kinase activity"/>
    <property type="evidence" value="ECO:0007669"/>
    <property type="project" value="UniProtKB-UniRule"/>
</dbReference>
<dbReference type="GO" id="GO:0009088">
    <property type="term" value="P:threonine biosynthetic process"/>
    <property type="evidence" value="ECO:0007669"/>
    <property type="project" value="UniProtKB-UniRule"/>
</dbReference>
<dbReference type="Gene3D" id="3.30.230.10">
    <property type="match status" value="1"/>
</dbReference>
<dbReference type="Gene3D" id="3.30.70.890">
    <property type="entry name" value="GHMP kinase, C-terminal domain"/>
    <property type="match status" value="1"/>
</dbReference>
<dbReference type="HAMAP" id="MF_00384">
    <property type="entry name" value="Homoser_kinase"/>
    <property type="match status" value="1"/>
</dbReference>
<dbReference type="InterPro" id="IPR013750">
    <property type="entry name" value="GHMP_kinase_C_dom"/>
</dbReference>
<dbReference type="InterPro" id="IPR036554">
    <property type="entry name" value="GHMP_kinase_C_sf"/>
</dbReference>
<dbReference type="InterPro" id="IPR006204">
    <property type="entry name" value="GHMP_kinase_N_dom"/>
</dbReference>
<dbReference type="InterPro" id="IPR006203">
    <property type="entry name" value="GHMP_knse_ATP-bd_CS"/>
</dbReference>
<dbReference type="InterPro" id="IPR000870">
    <property type="entry name" value="Homoserine_kinase"/>
</dbReference>
<dbReference type="InterPro" id="IPR020568">
    <property type="entry name" value="Ribosomal_Su5_D2-typ_SF"/>
</dbReference>
<dbReference type="InterPro" id="IPR014721">
    <property type="entry name" value="Ribsml_uS5_D2-typ_fold_subgr"/>
</dbReference>
<dbReference type="NCBIfam" id="TIGR00191">
    <property type="entry name" value="thrB"/>
    <property type="match status" value="1"/>
</dbReference>
<dbReference type="PANTHER" id="PTHR20861:SF1">
    <property type="entry name" value="HOMOSERINE KINASE"/>
    <property type="match status" value="1"/>
</dbReference>
<dbReference type="PANTHER" id="PTHR20861">
    <property type="entry name" value="HOMOSERINE/4-DIPHOSPHOCYTIDYL-2-C-METHYL-D-ERYTHRITOL KINASE"/>
    <property type="match status" value="1"/>
</dbReference>
<dbReference type="Pfam" id="PF08544">
    <property type="entry name" value="GHMP_kinases_C"/>
    <property type="match status" value="1"/>
</dbReference>
<dbReference type="Pfam" id="PF00288">
    <property type="entry name" value="GHMP_kinases_N"/>
    <property type="match status" value="1"/>
</dbReference>
<dbReference type="PIRSF" id="PIRSF000676">
    <property type="entry name" value="Homoser_kin"/>
    <property type="match status" value="1"/>
</dbReference>
<dbReference type="PRINTS" id="PR00958">
    <property type="entry name" value="HOMSERKINASE"/>
</dbReference>
<dbReference type="SUPFAM" id="SSF55060">
    <property type="entry name" value="GHMP Kinase, C-terminal domain"/>
    <property type="match status" value="1"/>
</dbReference>
<dbReference type="SUPFAM" id="SSF54211">
    <property type="entry name" value="Ribosomal protein S5 domain 2-like"/>
    <property type="match status" value="1"/>
</dbReference>
<dbReference type="PROSITE" id="PS00627">
    <property type="entry name" value="GHMP_KINASES_ATP"/>
    <property type="match status" value="1"/>
</dbReference>
<proteinExistence type="inferred from homology"/>
<reference key="1">
    <citation type="journal article" date="2001" name="Lancet">
        <title>Whole genome sequencing of meticillin-resistant Staphylococcus aureus.</title>
        <authorList>
            <person name="Kuroda M."/>
            <person name="Ohta T."/>
            <person name="Uchiyama I."/>
            <person name="Baba T."/>
            <person name="Yuzawa H."/>
            <person name="Kobayashi I."/>
            <person name="Cui L."/>
            <person name="Oguchi A."/>
            <person name="Aoki K."/>
            <person name="Nagai Y."/>
            <person name="Lian J.-Q."/>
            <person name="Ito T."/>
            <person name="Kanamori M."/>
            <person name="Matsumaru H."/>
            <person name="Maruyama A."/>
            <person name="Murakami H."/>
            <person name="Hosoyama A."/>
            <person name="Mizutani-Ui Y."/>
            <person name="Takahashi N.K."/>
            <person name="Sawano T."/>
            <person name="Inoue R."/>
            <person name="Kaito C."/>
            <person name="Sekimizu K."/>
            <person name="Hirakawa H."/>
            <person name="Kuhara S."/>
            <person name="Goto S."/>
            <person name="Yabuzaki J."/>
            <person name="Kanehisa M."/>
            <person name="Yamashita A."/>
            <person name="Oshima K."/>
            <person name="Furuya K."/>
            <person name="Yoshino C."/>
            <person name="Shiba T."/>
            <person name="Hattori M."/>
            <person name="Ogasawara N."/>
            <person name="Hayashi H."/>
            <person name="Hiramatsu K."/>
        </authorList>
    </citation>
    <scope>NUCLEOTIDE SEQUENCE [LARGE SCALE GENOMIC DNA]</scope>
    <source>
        <strain>Mu50 / ATCC 700699</strain>
    </source>
</reference>
<gene>
    <name evidence="1" type="primary">thrB</name>
    <name type="ordered locus">SAV1330</name>
</gene>
<name>KHSE_STAAM</name>
<evidence type="ECO:0000255" key="1">
    <source>
        <dbReference type="HAMAP-Rule" id="MF_00384"/>
    </source>
</evidence>
<sequence length="304" mass="33250">MSNVLELTIPASTANLGVGFDSIGMALDKFLHLSVKETSGTKWEYIFHDDASKQLPTDETNFIYHVAQQVASKYSVDLPILCIEMRSDIPLARGLGSSASALVGAIYIANYFGDIQLSKHEVLQLATEIEGHPDNVAPTIYGGLIAGFYNDVSKETSVAHIDIPDVDVIVTIPTYELKTEASRRALPQKLTHSEAVKSSAISNTMICALAQHNYELAGKLMQQDGFHEPYRQHLIAEFDEVKTIASQHNAYATVISGAGPTILIFSRKENSGELVRSLNSQVVSCHSELVDINISGVKERIVYQ</sequence>
<feature type="chain" id="PRO_0000156605" description="Homoserine kinase">
    <location>
        <begin position="1"/>
        <end position="304"/>
    </location>
</feature>
<feature type="binding site" evidence="1">
    <location>
        <begin position="90"/>
        <end position="100"/>
    </location>
    <ligand>
        <name>ATP</name>
        <dbReference type="ChEBI" id="CHEBI:30616"/>
    </ligand>
</feature>
<protein>
    <recommendedName>
        <fullName evidence="1">Homoserine kinase</fullName>
        <shortName evidence="1">HK</shortName>
        <shortName evidence="1">HSK</shortName>
        <ecNumber evidence="1">2.7.1.39</ecNumber>
    </recommendedName>
</protein>
<keyword id="KW-0028">Amino-acid biosynthesis</keyword>
<keyword id="KW-0067">ATP-binding</keyword>
<keyword id="KW-0963">Cytoplasm</keyword>
<keyword id="KW-0418">Kinase</keyword>
<keyword id="KW-0547">Nucleotide-binding</keyword>
<keyword id="KW-0791">Threonine biosynthesis</keyword>
<keyword id="KW-0808">Transferase</keyword>
<organism>
    <name type="scientific">Staphylococcus aureus (strain Mu50 / ATCC 700699)</name>
    <dbReference type="NCBI Taxonomy" id="158878"/>
    <lineage>
        <taxon>Bacteria</taxon>
        <taxon>Bacillati</taxon>
        <taxon>Bacillota</taxon>
        <taxon>Bacilli</taxon>
        <taxon>Bacillales</taxon>
        <taxon>Staphylococcaceae</taxon>
        <taxon>Staphylococcus</taxon>
    </lineage>
</organism>
<accession>P65228</accession>
<accession>Q99UE6</accession>
<comment type="function">
    <text evidence="1">Catalyzes the ATP-dependent phosphorylation of L-homoserine to L-homoserine phosphate.</text>
</comment>
<comment type="catalytic activity">
    <reaction evidence="1">
        <text>L-homoserine + ATP = O-phospho-L-homoserine + ADP + H(+)</text>
        <dbReference type="Rhea" id="RHEA:13985"/>
        <dbReference type="ChEBI" id="CHEBI:15378"/>
        <dbReference type="ChEBI" id="CHEBI:30616"/>
        <dbReference type="ChEBI" id="CHEBI:57476"/>
        <dbReference type="ChEBI" id="CHEBI:57590"/>
        <dbReference type="ChEBI" id="CHEBI:456216"/>
        <dbReference type="EC" id="2.7.1.39"/>
    </reaction>
</comment>
<comment type="pathway">
    <text evidence="1">Amino-acid biosynthesis; L-threonine biosynthesis; L-threonine from L-aspartate: step 4/5.</text>
</comment>
<comment type="subcellular location">
    <subcellularLocation>
        <location evidence="1">Cytoplasm</location>
    </subcellularLocation>
</comment>
<comment type="similarity">
    <text evidence="1">Belongs to the GHMP kinase family. Homoserine kinase subfamily.</text>
</comment>